<feature type="chain" id="PRO_1000184632" description="ATP synthase subunit delta">
    <location>
        <begin position="1"/>
        <end position="178"/>
    </location>
</feature>
<name>ATPD_ACIBY</name>
<comment type="function">
    <text evidence="1">F(1)F(0) ATP synthase produces ATP from ADP in the presence of a proton or sodium gradient. F-type ATPases consist of two structural domains, F(1) containing the extramembraneous catalytic core and F(0) containing the membrane proton channel, linked together by a central stalk and a peripheral stalk. During catalysis, ATP synthesis in the catalytic domain of F(1) is coupled via a rotary mechanism of the central stalk subunits to proton translocation.</text>
</comment>
<comment type="function">
    <text evidence="1">This protein is part of the stalk that links CF(0) to CF(1). It either transmits conformational changes from CF(0) to CF(1) or is implicated in proton conduction.</text>
</comment>
<comment type="subunit">
    <text evidence="1">F-type ATPases have 2 components, F(1) - the catalytic core - and F(0) - the membrane proton channel. F(1) has five subunits: alpha(3), beta(3), gamma(1), delta(1), epsilon(1). F(0) has three main subunits: a(1), b(2) and c(10-14). The alpha and beta chains form an alternating ring which encloses part of the gamma chain. F(1) is attached to F(0) by a central stalk formed by the gamma and epsilon chains, while a peripheral stalk is formed by the delta and b chains.</text>
</comment>
<comment type="subcellular location">
    <subcellularLocation>
        <location evidence="1">Cell inner membrane</location>
        <topology evidence="1">Peripheral membrane protein</topology>
    </subcellularLocation>
</comment>
<comment type="similarity">
    <text evidence="1">Belongs to the ATPase delta chain family.</text>
</comment>
<evidence type="ECO:0000255" key="1">
    <source>
        <dbReference type="HAMAP-Rule" id="MF_01416"/>
    </source>
</evidence>
<sequence length="178" mass="19509">MAELLTLARPYAKAAFAYASEQGATDNWSNALQVLSAAVQDEAFSAYLNRPELTPAEQVKLFAKVLGEDQSQAVSNFLTLLADNDRLVLLPEIAAEYEQLKSQNNNNVDVVIESAFPLTAEQEQLLKSALEKRFNSTVTVSVEVKPELIAGVVIRAGDQVIDDSALNKLEKMRTRLLA</sequence>
<protein>
    <recommendedName>
        <fullName evidence="1">ATP synthase subunit delta</fullName>
    </recommendedName>
    <alternativeName>
        <fullName evidence="1">ATP synthase F(1) sector subunit delta</fullName>
    </alternativeName>
    <alternativeName>
        <fullName evidence="1">F-type ATPase subunit delta</fullName>
        <shortName evidence="1">F-ATPase subunit delta</shortName>
    </alternativeName>
</protein>
<proteinExistence type="inferred from homology"/>
<organism>
    <name type="scientific">Acinetobacter baumannii (strain AYE)</name>
    <dbReference type="NCBI Taxonomy" id="509173"/>
    <lineage>
        <taxon>Bacteria</taxon>
        <taxon>Pseudomonadati</taxon>
        <taxon>Pseudomonadota</taxon>
        <taxon>Gammaproteobacteria</taxon>
        <taxon>Moraxellales</taxon>
        <taxon>Moraxellaceae</taxon>
        <taxon>Acinetobacter</taxon>
        <taxon>Acinetobacter calcoaceticus/baumannii complex</taxon>
    </lineage>
</organism>
<keyword id="KW-0066">ATP synthesis</keyword>
<keyword id="KW-0997">Cell inner membrane</keyword>
<keyword id="KW-1003">Cell membrane</keyword>
<keyword id="KW-0139">CF(1)</keyword>
<keyword id="KW-0375">Hydrogen ion transport</keyword>
<keyword id="KW-0406">Ion transport</keyword>
<keyword id="KW-0472">Membrane</keyword>
<keyword id="KW-0813">Transport</keyword>
<reference key="1">
    <citation type="journal article" date="2008" name="PLoS ONE">
        <title>Comparative analysis of Acinetobacters: three genomes for three lifestyles.</title>
        <authorList>
            <person name="Vallenet D."/>
            <person name="Nordmann P."/>
            <person name="Barbe V."/>
            <person name="Poirel L."/>
            <person name="Mangenot S."/>
            <person name="Bataille E."/>
            <person name="Dossat C."/>
            <person name="Gas S."/>
            <person name="Kreimeyer A."/>
            <person name="Lenoble P."/>
            <person name="Oztas S."/>
            <person name="Poulain J."/>
            <person name="Segurens B."/>
            <person name="Robert C."/>
            <person name="Abergel C."/>
            <person name="Claverie J.-M."/>
            <person name="Raoult D."/>
            <person name="Medigue C."/>
            <person name="Weissenbach J."/>
            <person name="Cruveiller S."/>
        </authorList>
    </citation>
    <scope>NUCLEOTIDE SEQUENCE [LARGE SCALE GENOMIC DNA]</scope>
    <source>
        <strain>AYE</strain>
    </source>
</reference>
<accession>B0VBP6</accession>
<dbReference type="EMBL" id="CU459141">
    <property type="protein sequence ID" value="CAM88483.1"/>
    <property type="molecule type" value="Genomic_DNA"/>
</dbReference>
<dbReference type="RefSeq" id="WP_000818995.1">
    <property type="nucleotide sequence ID" value="NZ_JBDGFB010000006.1"/>
</dbReference>
<dbReference type="SMR" id="B0VBP6"/>
<dbReference type="EnsemblBacteria" id="CAM88483">
    <property type="protein sequence ID" value="CAM88483"/>
    <property type="gene ID" value="ABAYE3719"/>
</dbReference>
<dbReference type="KEGG" id="aby:ABAYE3719"/>
<dbReference type="HOGENOM" id="CLU_085114_3_0_6"/>
<dbReference type="GO" id="GO:0005886">
    <property type="term" value="C:plasma membrane"/>
    <property type="evidence" value="ECO:0007669"/>
    <property type="project" value="UniProtKB-SubCell"/>
</dbReference>
<dbReference type="GO" id="GO:0045259">
    <property type="term" value="C:proton-transporting ATP synthase complex"/>
    <property type="evidence" value="ECO:0007669"/>
    <property type="project" value="UniProtKB-KW"/>
</dbReference>
<dbReference type="GO" id="GO:0046933">
    <property type="term" value="F:proton-transporting ATP synthase activity, rotational mechanism"/>
    <property type="evidence" value="ECO:0007669"/>
    <property type="project" value="UniProtKB-UniRule"/>
</dbReference>
<dbReference type="Gene3D" id="1.10.520.20">
    <property type="entry name" value="N-terminal domain of the delta subunit of the F1F0-ATP synthase"/>
    <property type="match status" value="1"/>
</dbReference>
<dbReference type="HAMAP" id="MF_01416">
    <property type="entry name" value="ATP_synth_delta_bact"/>
    <property type="match status" value="1"/>
</dbReference>
<dbReference type="InterPro" id="IPR026015">
    <property type="entry name" value="ATP_synth_OSCP/delta_N_sf"/>
</dbReference>
<dbReference type="InterPro" id="IPR020781">
    <property type="entry name" value="ATPase_OSCP/d_CS"/>
</dbReference>
<dbReference type="InterPro" id="IPR000711">
    <property type="entry name" value="ATPase_OSCP/dsu"/>
</dbReference>
<dbReference type="NCBIfam" id="TIGR01145">
    <property type="entry name" value="ATP_synt_delta"/>
    <property type="match status" value="1"/>
</dbReference>
<dbReference type="NCBIfam" id="NF004402">
    <property type="entry name" value="PRK05758.2-2"/>
    <property type="match status" value="1"/>
</dbReference>
<dbReference type="PANTHER" id="PTHR11910">
    <property type="entry name" value="ATP SYNTHASE DELTA CHAIN"/>
    <property type="match status" value="1"/>
</dbReference>
<dbReference type="Pfam" id="PF00213">
    <property type="entry name" value="OSCP"/>
    <property type="match status" value="1"/>
</dbReference>
<dbReference type="PRINTS" id="PR00125">
    <property type="entry name" value="ATPASEDELTA"/>
</dbReference>
<dbReference type="SUPFAM" id="SSF47928">
    <property type="entry name" value="N-terminal domain of the delta subunit of the F1F0-ATP synthase"/>
    <property type="match status" value="1"/>
</dbReference>
<dbReference type="PROSITE" id="PS00389">
    <property type="entry name" value="ATPASE_DELTA"/>
    <property type="match status" value="1"/>
</dbReference>
<gene>
    <name evidence="1" type="primary">atpH</name>
    <name type="ordered locus">ABAYE3719</name>
</gene>